<protein>
    <recommendedName>
        <fullName evidence="1">Asparagine--tRNA ligase</fullName>
        <ecNumber evidence="1">6.1.1.22</ecNumber>
    </recommendedName>
    <alternativeName>
        <fullName evidence="1">Asparaginyl-tRNA synthetase</fullName>
        <shortName evidence="1">AsnRS</shortName>
    </alternativeName>
</protein>
<sequence>MNTTIKEAKQYIGQEVTIGAWLTNKRSSGKIAFLQLRDGTGFIQGVVAKAEVDEEIFQKAKEITQESSLYVTGVISEDNRSDIGYEMQVKSIEVISEAHDYPITPKNHGTEFLMDHRHLWLRSKKQHAVMKIRNEIIRATYEFFNDNGFTKIDPPILTASAPEGTSELFHTKYFDQDAFLSQSGQLYMEAAAMAHGRVFSFGPTFRAEKSKTRRHLIEFWMIEPEMAFCEHAQSLEVQEQYVTHVVKSVLNHCKLELKALDRDTSKLEKVTTPFPRITYADAVIFLKEQGFDDIEWGEDFGAPHETAIANHYDLPVFITNYPTKIKPFYMQPNPENEDTVLCADLIAPEGYGEIIGGSERINDLELLEERLSQFELDAESYSYYLDLRRYGSVPHSGFGLGLERTVAWLSGVEHVRETAPFPRLLNRLYP</sequence>
<dbReference type="EC" id="6.1.1.22" evidence="1"/>
<dbReference type="EMBL" id="AP008934">
    <property type="protein sequence ID" value="BAE18435.1"/>
    <property type="molecule type" value="Genomic_DNA"/>
</dbReference>
<dbReference type="RefSeq" id="WP_011303080.1">
    <property type="nucleotide sequence ID" value="NZ_MTGA01000038.1"/>
</dbReference>
<dbReference type="SMR" id="Q49XR0"/>
<dbReference type="GeneID" id="3616530"/>
<dbReference type="KEGG" id="ssp:SSP1290"/>
<dbReference type="PATRIC" id="fig|342451.11.peg.1292"/>
<dbReference type="eggNOG" id="COG0017">
    <property type="taxonomic scope" value="Bacteria"/>
</dbReference>
<dbReference type="HOGENOM" id="CLU_004553_2_0_9"/>
<dbReference type="OrthoDB" id="9762036at2"/>
<dbReference type="Proteomes" id="UP000006371">
    <property type="component" value="Chromosome"/>
</dbReference>
<dbReference type="GO" id="GO:0005737">
    <property type="term" value="C:cytoplasm"/>
    <property type="evidence" value="ECO:0007669"/>
    <property type="project" value="UniProtKB-SubCell"/>
</dbReference>
<dbReference type="GO" id="GO:0004816">
    <property type="term" value="F:asparagine-tRNA ligase activity"/>
    <property type="evidence" value="ECO:0007669"/>
    <property type="project" value="UniProtKB-UniRule"/>
</dbReference>
<dbReference type="GO" id="GO:0005524">
    <property type="term" value="F:ATP binding"/>
    <property type="evidence" value="ECO:0007669"/>
    <property type="project" value="UniProtKB-UniRule"/>
</dbReference>
<dbReference type="GO" id="GO:0140096">
    <property type="term" value="F:catalytic activity, acting on a protein"/>
    <property type="evidence" value="ECO:0007669"/>
    <property type="project" value="UniProtKB-ARBA"/>
</dbReference>
<dbReference type="GO" id="GO:0003676">
    <property type="term" value="F:nucleic acid binding"/>
    <property type="evidence" value="ECO:0007669"/>
    <property type="project" value="InterPro"/>
</dbReference>
<dbReference type="GO" id="GO:0016740">
    <property type="term" value="F:transferase activity"/>
    <property type="evidence" value="ECO:0007669"/>
    <property type="project" value="UniProtKB-ARBA"/>
</dbReference>
<dbReference type="GO" id="GO:0006421">
    <property type="term" value="P:asparaginyl-tRNA aminoacylation"/>
    <property type="evidence" value="ECO:0007669"/>
    <property type="project" value="UniProtKB-UniRule"/>
</dbReference>
<dbReference type="CDD" id="cd04323">
    <property type="entry name" value="AsnRS_cyto_like_N"/>
    <property type="match status" value="1"/>
</dbReference>
<dbReference type="CDD" id="cd00776">
    <property type="entry name" value="AsxRS_core"/>
    <property type="match status" value="1"/>
</dbReference>
<dbReference type="Gene3D" id="3.30.930.10">
    <property type="entry name" value="Bira Bifunctional Protein, Domain 2"/>
    <property type="match status" value="1"/>
</dbReference>
<dbReference type="Gene3D" id="2.40.50.140">
    <property type="entry name" value="Nucleic acid-binding proteins"/>
    <property type="match status" value="1"/>
</dbReference>
<dbReference type="HAMAP" id="MF_00534">
    <property type="entry name" value="Asn_tRNA_synth"/>
    <property type="match status" value="1"/>
</dbReference>
<dbReference type="InterPro" id="IPR004364">
    <property type="entry name" value="Aa-tRNA-synt_II"/>
</dbReference>
<dbReference type="InterPro" id="IPR006195">
    <property type="entry name" value="aa-tRNA-synth_II"/>
</dbReference>
<dbReference type="InterPro" id="IPR045864">
    <property type="entry name" value="aa-tRNA-synth_II/BPL/LPL"/>
</dbReference>
<dbReference type="InterPro" id="IPR004522">
    <property type="entry name" value="Asn-tRNA-ligase"/>
</dbReference>
<dbReference type="InterPro" id="IPR002312">
    <property type="entry name" value="Asp/Asn-tRNA-synth_IIb"/>
</dbReference>
<dbReference type="InterPro" id="IPR012340">
    <property type="entry name" value="NA-bd_OB-fold"/>
</dbReference>
<dbReference type="InterPro" id="IPR004365">
    <property type="entry name" value="NA-bd_OB_tRNA"/>
</dbReference>
<dbReference type="NCBIfam" id="TIGR00457">
    <property type="entry name" value="asnS"/>
    <property type="match status" value="1"/>
</dbReference>
<dbReference type="NCBIfam" id="NF003037">
    <property type="entry name" value="PRK03932.1"/>
    <property type="match status" value="1"/>
</dbReference>
<dbReference type="NCBIfam" id="NF003483">
    <property type="entry name" value="PRK05159.1"/>
    <property type="match status" value="1"/>
</dbReference>
<dbReference type="PANTHER" id="PTHR22594:SF34">
    <property type="entry name" value="ASPARAGINE--TRNA LIGASE, MITOCHONDRIAL-RELATED"/>
    <property type="match status" value="1"/>
</dbReference>
<dbReference type="PANTHER" id="PTHR22594">
    <property type="entry name" value="ASPARTYL/LYSYL-TRNA SYNTHETASE"/>
    <property type="match status" value="1"/>
</dbReference>
<dbReference type="Pfam" id="PF00152">
    <property type="entry name" value="tRNA-synt_2"/>
    <property type="match status" value="1"/>
</dbReference>
<dbReference type="Pfam" id="PF01336">
    <property type="entry name" value="tRNA_anti-codon"/>
    <property type="match status" value="1"/>
</dbReference>
<dbReference type="PRINTS" id="PR01042">
    <property type="entry name" value="TRNASYNTHASP"/>
</dbReference>
<dbReference type="SUPFAM" id="SSF55681">
    <property type="entry name" value="Class II aaRS and biotin synthetases"/>
    <property type="match status" value="1"/>
</dbReference>
<dbReference type="SUPFAM" id="SSF50249">
    <property type="entry name" value="Nucleic acid-binding proteins"/>
    <property type="match status" value="1"/>
</dbReference>
<dbReference type="PROSITE" id="PS50862">
    <property type="entry name" value="AA_TRNA_LIGASE_II"/>
    <property type="match status" value="1"/>
</dbReference>
<proteinExistence type="inferred from homology"/>
<name>SYN_STAS1</name>
<gene>
    <name evidence="1" type="primary">asnS</name>
    <name type="ordered locus">SSP1290</name>
</gene>
<reference key="1">
    <citation type="journal article" date="2005" name="Proc. Natl. Acad. Sci. U.S.A.">
        <title>Whole genome sequence of Staphylococcus saprophyticus reveals the pathogenesis of uncomplicated urinary tract infection.</title>
        <authorList>
            <person name="Kuroda M."/>
            <person name="Yamashita A."/>
            <person name="Hirakawa H."/>
            <person name="Kumano M."/>
            <person name="Morikawa K."/>
            <person name="Higashide M."/>
            <person name="Maruyama A."/>
            <person name="Inose Y."/>
            <person name="Matoba K."/>
            <person name="Toh H."/>
            <person name="Kuhara S."/>
            <person name="Hattori M."/>
            <person name="Ohta T."/>
        </authorList>
    </citation>
    <scope>NUCLEOTIDE SEQUENCE [LARGE SCALE GENOMIC DNA]</scope>
    <source>
        <strain>ATCC 15305 / DSM 20229 / NCIMB 8711 / NCTC 7292 / S-41</strain>
    </source>
</reference>
<feature type="chain" id="PRO_0000176456" description="Asparagine--tRNA ligase">
    <location>
        <begin position="1"/>
        <end position="430"/>
    </location>
</feature>
<comment type="catalytic activity">
    <reaction evidence="1">
        <text>tRNA(Asn) + L-asparagine + ATP = L-asparaginyl-tRNA(Asn) + AMP + diphosphate + H(+)</text>
        <dbReference type="Rhea" id="RHEA:11180"/>
        <dbReference type="Rhea" id="RHEA-COMP:9659"/>
        <dbReference type="Rhea" id="RHEA-COMP:9674"/>
        <dbReference type="ChEBI" id="CHEBI:15378"/>
        <dbReference type="ChEBI" id="CHEBI:30616"/>
        <dbReference type="ChEBI" id="CHEBI:33019"/>
        <dbReference type="ChEBI" id="CHEBI:58048"/>
        <dbReference type="ChEBI" id="CHEBI:78442"/>
        <dbReference type="ChEBI" id="CHEBI:78515"/>
        <dbReference type="ChEBI" id="CHEBI:456215"/>
        <dbReference type="EC" id="6.1.1.22"/>
    </reaction>
</comment>
<comment type="subunit">
    <text evidence="1">Homodimer.</text>
</comment>
<comment type="subcellular location">
    <subcellularLocation>
        <location evidence="1">Cytoplasm</location>
    </subcellularLocation>
</comment>
<comment type="similarity">
    <text evidence="1">Belongs to the class-II aminoacyl-tRNA synthetase family.</text>
</comment>
<evidence type="ECO:0000255" key="1">
    <source>
        <dbReference type="HAMAP-Rule" id="MF_00534"/>
    </source>
</evidence>
<keyword id="KW-0030">Aminoacyl-tRNA synthetase</keyword>
<keyword id="KW-0067">ATP-binding</keyword>
<keyword id="KW-0963">Cytoplasm</keyword>
<keyword id="KW-0436">Ligase</keyword>
<keyword id="KW-0547">Nucleotide-binding</keyword>
<keyword id="KW-0648">Protein biosynthesis</keyword>
<keyword id="KW-1185">Reference proteome</keyword>
<accession>Q49XR0</accession>
<organism>
    <name type="scientific">Staphylococcus saprophyticus subsp. saprophyticus (strain ATCC 15305 / DSM 20229 / NCIMB 8711 / NCTC 7292 / S-41)</name>
    <dbReference type="NCBI Taxonomy" id="342451"/>
    <lineage>
        <taxon>Bacteria</taxon>
        <taxon>Bacillati</taxon>
        <taxon>Bacillota</taxon>
        <taxon>Bacilli</taxon>
        <taxon>Bacillales</taxon>
        <taxon>Staphylococcaceae</taxon>
        <taxon>Staphylococcus</taxon>
    </lineage>
</organism>